<protein>
    <recommendedName>
        <fullName>Ethylene-responsive transcription factor CRF5</fullName>
    </recommendedName>
    <alternativeName>
        <fullName>Protein CYTOKININ RESPONSE FACTOR 5</fullName>
    </alternativeName>
</protein>
<organism>
    <name type="scientific">Arabidopsis thaliana</name>
    <name type="common">Mouse-ear cress</name>
    <dbReference type="NCBI Taxonomy" id="3702"/>
    <lineage>
        <taxon>Eukaryota</taxon>
        <taxon>Viridiplantae</taxon>
        <taxon>Streptophyta</taxon>
        <taxon>Embryophyta</taxon>
        <taxon>Tracheophyta</taxon>
        <taxon>Spermatophyta</taxon>
        <taxon>Magnoliopsida</taxon>
        <taxon>eudicotyledons</taxon>
        <taxon>Gunneridae</taxon>
        <taxon>Pentapetalae</taxon>
        <taxon>rosids</taxon>
        <taxon>malvids</taxon>
        <taxon>Brassicales</taxon>
        <taxon>Brassicaceae</taxon>
        <taxon>Camelineae</taxon>
        <taxon>Arabidopsis</taxon>
    </lineage>
</organism>
<keyword id="KW-0010">Activator</keyword>
<keyword id="KW-0932">Cytokinin signaling pathway</keyword>
<keyword id="KW-0963">Cytoplasm</keyword>
<keyword id="KW-0238">DNA-binding</keyword>
<keyword id="KW-0936">Ethylene signaling pathway</keyword>
<keyword id="KW-0539">Nucleus</keyword>
<keyword id="KW-1185">Reference proteome</keyword>
<keyword id="KW-0804">Transcription</keyword>
<keyword id="KW-0805">Transcription regulation</keyword>
<feature type="chain" id="PRO_0000297920" description="Ethylene-responsive transcription factor CRF5">
    <location>
        <begin position="1"/>
        <end position="294"/>
    </location>
</feature>
<feature type="DNA-binding region" description="AP2/ERF" evidence="2">
    <location>
        <begin position="98"/>
        <end position="155"/>
    </location>
</feature>
<feature type="region of interest" description="Disordered" evidence="3">
    <location>
        <begin position="35"/>
        <end position="54"/>
    </location>
</feature>
<feature type="region of interest" description="Disordered" evidence="3">
    <location>
        <begin position="64"/>
        <end position="87"/>
    </location>
</feature>
<comment type="function">
    <text evidence="1 4">Component of the cytokinin signaling pathway involved in cotyledons, leaves, and embryos development. Probably acts as a transcriptional activator. Binds to the GCC-box pathogenesis-related promoter element. May be involved in the regulation of gene expression by stress factors and by components of stress signal transduction pathways (By similarity).</text>
</comment>
<comment type="interaction">
    <interactant intactId="EBI-5567180">
        <id>O82339</id>
    </interactant>
    <interactant intactId="EBI-5567050">
        <id>O82503</id>
        <label>CRF1</label>
    </interactant>
    <organismsDiffer>false</organismsDiffer>
    <experiments>3</experiments>
</comment>
<comment type="interaction">
    <interactant intactId="EBI-5567180">
        <id>O82339</id>
    </interactant>
    <interactant intactId="EBI-5567273">
        <id>Q9SUQ2</id>
        <label>CRF2</label>
    </interactant>
    <organismsDiffer>false</organismsDiffer>
    <experiments>4</experiments>
</comment>
<comment type="interaction">
    <interactant intactId="EBI-5567180">
        <id>O82339</id>
    </interactant>
    <interactant intactId="EBI-5567993">
        <id>Q9FK12</id>
        <label>CRF3</label>
    </interactant>
    <organismsDiffer>false</organismsDiffer>
    <experiments>4</experiments>
</comment>
<comment type="interaction">
    <interactant intactId="EBI-5567180">
        <id>O82339</id>
    </interactant>
    <interactant intactId="EBI-5567027">
        <id>Q9SUE3</id>
        <label>CRF4</label>
    </interactant>
    <organismsDiffer>false</organismsDiffer>
    <experiments>4</experiments>
</comment>
<comment type="interaction">
    <interactant intactId="EBI-5567180">
        <id>O82339</id>
    </interactant>
    <interactant intactId="EBI-5568101">
        <id>Q9M374</id>
        <label>CRF6</label>
    </interactant>
    <organismsDiffer>false</organismsDiffer>
    <experiments>3</experiments>
</comment>
<comment type="interaction">
    <interactant intactId="EBI-5567180">
        <id>O82339</id>
    </interactant>
    <interactant intactId="EBI-5568301">
        <id>Q8W4I5</id>
        <label>ERF069</label>
    </interactant>
    <organismsDiffer>false</organismsDiffer>
    <experiments>3</experiments>
</comment>
<comment type="interaction">
    <interactant intactId="EBI-5567180">
        <id>O82339</id>
    </interactant>
    <interactant intactId="EBI-5568333">
        <id>Q9C995</id>
        <label>ERF070</label>
    </interactant>
    <organismsDiffer>false</organismsDiffer>
    <experiments>3</experiments>
</comment>
<comment type="subcellular location">
    <subcellularLocation>
        <location evidence="4">Cytoplasm</location>
    </subcellularLocation>
    <subcellularLocation>
        <location evidence="2 4">Nucleus</location>
    </subcellularLocation>
    <text>Relocalization from the cytoplasm into the nucleus is induced by cytokinins.</text>
</comment>
<comment type="induction">
    <text evidence="4">By cytokinins.</text>
</comment>
<comment type="similarity">
    <text evidence="5">Belongs to the AP2/ERF transcription factor family. ERF subfamily.</text>
</comment>
<gene>
    <name type="primary">CRF5</name>
    <name type="synonym">ERF068</name>
    <name type="ordered locus">At2g46310</name>
    <name type="ORF">T3F17.4</name>
</gene>
<reference key="1">
    <citation type="journal article" date="1999" name="Nature">
        <title>Sequence and analysis of chromosome 2 of the plant Arabidopsis thaliana.</title>
        <authorList>
            <person name="Lin X."/>
            <person name="Kaul S."/>
            <person name="Rounsley S.D."/>
            <person name="Shea T.P."/>
            <person name="Benito M.-I."/>
            <person name="Town C.D."/>
            <person name="Fujii C.Y."/>
            <person name="Mason T.M."/>
            <person name="Bowman C.L."/>
            <person name="Barnstead M.E."/>
            <person name="Feldblyum T.V."/>
            <person name="Buell C.R."/>
            <person name="Ketchum K.A."/>
            <person name="Lee J.J."/>
            <person name="Ronning C.M."/>
            <person name="Koo H.L."/>
            <person name="Moffat K.S."/>
            <person name="Cronin L.A."/>
            <person name="Shen M."/>
            <person name="Pai G."/>
            <person name="Van Aken S."/>
            <person name="Umayam L."/>
            <person name="Tallon L.J."/>
            <person name="Gill J.E."/>
            <person name="Adams M.D."/>
            <person name="Carrera A.J."/>
            <person name="Creasy T.H."/>
            <person name="Goodman H.M."/>
            <person name="Somerville C.R."/>
            <person name="Copenhaver G.P."/>
            <person name="Preuss D."/>
            <person name="Nierman W.C."/>
            <person name="White O."/>
            <person name="Eisen J.A."/>
            <person name="Salzberg S.L."/>
            <person name="Fraser C.M."/>
            <person name="Venter J.C."/>
        </authorList>
    </citation>
    <scope>NUCLEOTIDE SEQUENCE [LARGE SCALE GENOMIC DNA]</scope>
    <source>
        <strain>cv. Columbia</strain>
    </source>
</reference>
<reference key="2">
    <citation type="journal article" date="2017" name="Plant J.">
        <title>Araport11: a complete reannotation of the Arabidopsis thaliana reference genome.</title>
        <authorList>
            <person name="Cheng C.Y."/>
            <person name="Krishnakumar V."/>
            <person name="Chan A.P."/>
            <person name="Thibaud-Nissen F."/>
            <person name="Schobel S."/>
            <person name="Town C.D."/>
        </authorList>
    </citation>
    <scope>GENOME REANNOTATION</scope>
    <source>
        <strain>cv. Columbia</strain>
    </source>
</reference>
<reference key="3">
    <citation type="journal article" date="2003" name="Science">
        <title>Empirical analysis of transcriptional activity in the Arabidopsis genome.</title>
        <authorList>
            <person name="Yamada K."/>
            <person name="Lim J."/>
            <person name="Dale J.M."/>
            <person name="Chen H."/>
            <person name="Shinn P."/>
            <person name="Palm C.J."/>
            <person name="Southwick A.M."/>
            <person name="Wu H.C."/>
            <person name="Kim C.J."/>
            <person name="Nguyen M."/>
            <person name="Pham P.K."/>
            <person name="Cheuk R.F."/>
            <person name="Karlin-Newmann G."/>
            <person name="Liu S.X."/>
            <person name="Lam B."/>
            <person name="Sakano H."/>
            <person name="Wu T."/>
            <person name="Yu G."/>
            <person name="Miranda M."/>
            <person name="Quach H.L."/>
            <person name="Tripp M."/>
            <person name="Chang C.H."/>
            <person name="Lee J.M."/>
            <person name="Toriumi M.J."/>
            <person name="Chan M.M."/>
            <person name="Tang C.C."/>
            <person name="Onodera C.S."/>
            <person name="Deng J.M."/>
            <person name="Akiyama K."/>
            <person name="Ansari Y."/>
            <person name="Arakawa T."/>
            <person name="Banh J."/>
            <person name="Banno F."/>
            <person name="Bowser L."/>
            <person name="Brooks S.Y."/>
            <person name="Carninci P."/>
            <person name="Chao Q."/>
            <person name="Choy N."/>
            <person name="Enju A."/>
            <person name="Goldsmith A.D."/>
            <person name="Gurjal M."/>
            <person name="Hansen N.F."/>
            <person name="Hayashizaki Y."/>
            <person name="Johnson-Hopson C."/>
            <person name="Hsuan V.W."/>
            <person name="Iida K."/>
            <person name="Karnes M."/>
            <person name="Khan S."/>
            <person name="Koesema E."/>
            <person name="Ishida J."/>
            <person name="Jiang P.X."/>
            <person name="Jones T."/>
            <person name="Kawai J."/>
            <person name="Kamiya A."/>
            <person name="Meyers C."/>
            <person name="Nakajima M."/>
            <person name="Narusaka M."/>
            <person name="Seki M."/>
            <person name="Sakurai T."/>
            <person name="Satou M."/>
            <person name="Tamse R."/>
            <person name="Vaysberg M."/>
            <person name="Wallender E.K."/>
            <person name="Wong C."/>
            <person name="Yamamura Y."/>
            <person name="Yuan S."/>
            <person name="Shinozaki K."/>
            <person name="Davis R.W."/>
            <person name="Theologis A."/>
            <person name="Ecker J.R."/>
        </authorList>
    </citation>
    <scope>NUCLEOTIDE SEQUENCE [LARGE SCALE MRNA]</scope>
    <source>
        <strain>cv. Columbia</strain>
    </source>
</reference>
<reference key="4">
    <citation type="submission" date="2006-07" db="EMBL/GenBank/DDBJ databases">
        <title>Large-scale analysis of RIKEN Arabidopsis full-length (RAFL) cDNAs.</title>
        <authorList>
            <person name="Totoki Y."/>
            <person name="Seki M."/>
            <person name="Ishida J."/>
            <person name="Nakajima M."/>
            <person name="Enju A."/>
            <person name="Kamiya A."/>
            <person name="Narusaka M."/>
            <person name="Shin-i T."/>
            <person name="Nakagawa M."/>
            <person name="Sakamoto N."/>
            <person name="Oishi K."/>
            <person name="Kohara Y."/>
            <person name="Kobayashi M."/>
            <person name="Toyoda A."/>
            <person name="Sakaki Y."/>
            <person name="Sakurai T."/>
            <person name="Iida K."/>
            <person name="Akiyama K."/>
            <person name="Satou M."/>
            <person name="Toyoda T."/>
            <person name="Konagaya A."/>
            <person name="Carninci P."/>
            <person name="Kawai J."/>
            <person name="Hayashizaki Y."/>
            <person name="Shinozaki K."/>
        </authorList>
    </citation>
    <scope>NUCLEOTIDE SEQUENCE [LARGE SCALE MRNA]</scope>
    <source>
        <strain>cv. Columbia</strain>
    </source>
</reference>
<reference key="5">
    <citation type="journal article" date="2006" name="Proc. Natl. Acad. Sci. U.S.A.">
        <title>A subset of Arabidopsis AP2 transcription factors mediates cytokinin responses in concert with a two-component pathway.</title>
        <authorList>
            <person name="Rashotte A.M."/>
            <person name="Mason M.G."/>
            <person name="Hutchison C.E."/>
            <person name="Ferreira F.J."/>
            <person name="Schaller G.E."/>
            <person name="Kieber J.J."/>
        </authorList>
    </citation>
    <scope>FUNCTION</scope>
    <scope>INDUCTION BY CYTOKININS</scope>
    <scope>SUBCELLULAR LOCATION</scope>
</reference>
<reference key="6">
    <citation type="journal article" date="2006" name="Plant Physiol.">
        <title>Genome-wide analysis of the ERF gene family in Arabidopsis and rice.</title>
        <authorList>
            <person name="Nakano T."/>
            <person name="Suzuki K."/>
            <person name="Fujimura T."/>
            <person name="Shinshi H."/>
        </authorList>
    </citation>
    <scope>GENE FAMILY</scope>
    <scope>NOMENCLATURE</scope>
</reference>
<evidence type="ECO:0000250" key="1"/>
<evidence type="ECO:0000255" key="2">
    <source>
        <dbReference type="PROSITE-ProRule" id="PRU00366"/>
    </source>
</evidence>
<evidence type="ECO:0000256" key="3">
    <source>
        <dbReference type="SAM" id="MobiDB-lite"/>
    </source>
</evidence>
<evidence type="ECO:0000269" key="4">
    <source>
    </source>
</evidence>
<evidence type="ECO:0000305" key="5"/>
<accession>O82339</accession>
<proteinExistence type="evidence at protein level"/>
<dbReference type="EMBL" id="AC005397">
    <property type="protein sequence ID" value="AAC62875.1"/>
    <property type="molecule type" value="Genomic_DNA"/>
</dbReference>
<dbReference type="EMBL" id="CP002685">
    <property type="protein sequence ID" value="AEC10675.1"/>
    <property type="molecule type" value="Genomic_DNA"/>
</dbReference>
<dbReference type="EMBL" id="AY074638">
    <property type="protein sequence ID" value="AAL69454.1"/>
    <property type="molecule type" value="mRNA"/>
</dbReference>
<dbReference type="EMBL" id="BT003121">
    <property type="protein sequence ID" value="AAO24553.1"/>
    <property type="molecule type" value="mRNA"/>
</dbReference>
<dbReference type="EMBL" id="AK227661">
    <property type="protein sequence ID" value="BAE99648.1"/>
    <property type="molecule type" value="mRNA"/>
</dbReference>
<dbReference type="PIR" id="C84901">
    <property type="entry name" value="C84901"/>
</dbReference>
<dbReference type="RefSeq" id="NP_182154.1">
    <property type="nucleotide sequence ID" value="NM_130194.5"/>
</dbReference>
<dbReference type="SMR" id="O82339"/>
<dbReference type="BioGRID" id="4574">
    <property type="interactions" value="14"/>
</dbReference>
<dbReference type="FunCoup" id="O82339">
    <property type="interactions" value="8"/>
</dbReference>
<dbReference type="IntAct" id="O82339">
    <property type="interactions" value="14"/>
</dbReference>
<dbReference type="STRING" id="3702.O82339"/>
<dbReference type="GlyGen" id="O82339">
    <property type="glycosylation" value="1 site"/>
</dbReference>
<dbReference type="PaxDb" id="3702-AT2G46310.1"/>
<dbReference type="ProteomicsDB" id="222675"/>
<dbReference type="EnsemblPlants" id="AT2G46310.1">
    <property type="protein sequence ID" value="AT2G46310.1"/>
    <property type="gene ID" value="AT2G46310"/>
</dbReference>
<dbReference type="GeneID" id="819239"/>
<dbReference type="Gramene" id="AT2G46310.1">
    <property type="protein sequence ID" value="AT2G46310.1"/>
    <property type="gene ID" value="AT2G46310"/>
</dbReference>
<dbReference type="KEGG" id="ath:AT2G46310"/>
<dbReference type="Araport" id="AT2G46310"/>
<dbReference type="TAIR" id="AT2G46310">
    <property type="gene designation" value="CRF5"/>
</dbReference>
<dbReference type="eggNOG" id="ENOG502RYD1">
    <property type="taxonomic scope" value="Eukaryota"/>
</dbReference>
<dbReference type="HOGENOM" id="CLU_062946_1_0_1"/>
<dbReference type="InParanoid" id="O82339"/>
<dbReference type="OMA" id="EEIRFCD"/>
<dbReference type="OrthoDB" id="610645at2759"/>
<dbReference type="PhylomeDB" id="O82339"/>
<dbReference type="PRO" id="PR:O82339"/>
<dbReference type="Proteomes" id="UP000006548">
    <property type="component" value="Chromosome 2"/>
</dbReference>
<dbReference type="ExpressionAtlas" id="O82339">
    <property type="expression patterns" value="baseline and differential"/>
</dbReference>
<dbReference type="GO" id="GO:0005737">
    <property type="term" value="C:cytoplasm"/>
    <property type="evidence" value="ECO:0007669"/>
    <property type="project" value="UniProtKB-SubCell"/>
</dbReference>
<dbReference type="GO" id="GO:0005634">
    <property type="term" value="C:nucleus"/>
    <property type="evidence" value="ECO:0007669"/>
    <property type="project" value="UniProtKB-SubCell"/>
</dbReference>
<dbReference type="GO" id="GO:0003700">
    <property type="term" value="F:DNA-binding transcription factor activity"/>
    <property type="evidence" value="ECO:0000250"/>
    <property type="project" value="TAIR"/>
</dbReference>
<dbReference type="GO" id="GO:0000976">
    <property type="term" value="F:transcription cis-regulatory region binding"/>
    <property type="evidence" value="ECO:0000353"/>
    <property type="project" value="TAIR"/>
</dbReference>
<dbReference type="GO" id="GO:0048825">
    <property type="term" value="P:cotyledon development"/>
    <property type="evidence" value="ECO:0000315"/>
    <property type="project" value="TAIR"/>
</dbReference>
<dbReference type="GO" id="GO:0009736">
    <property type="term" value="P:cytokinin-activated signaling pathway"/>
    <property type="evidence" value="ECO:0007669"/>
    <property type="project" value="UniProtKB-KW"/>
</dbReference>
<dbReference type="GO" id="GO:0009873">
    <property type="term" value="P:ethylene-activated signaling pathway"/>
    <property type="evidence" value="ECO:0007669"/>
    <property type="project" value="UniProtKB-KW"/>
</dbReference>
<dbReference type="GO" id="GO:0048366">
    <property type="term" value="P:leaf development"/>
    <property type="evidence" value="ECO:0000315"/>
    <property type="project" value="TAIR"/>
</dbReference>
<dbReference type="CDD" id="cd00018">
    <property type="entry name" value="AP2"/>
    <property type="match status" value="1"/>
</dbReference>
<dbReference type="FunFam" id="3.30.730.10:FF:000001">
    <property type="entry name" value="Ethylene-responsive transcription factor 2"/>
    <property type="match status" value="1"/>
</dbReference>
<dbReference type="Gene3D" id="3.30.730.10">
    <property type="entry name" value="AP2/ERF domain"/>
    <property type="match status" value="1"/>
</dbReference>
<dbReference type="InterPro" id="IPR001471">
    <property type="entry name" value="AP2/ERF_dom"/>
</dbReference>
<dbReference type="InterPro" id="IPR036955">
    <property type="entry name" value="AP2/ERF_dom_sf"/>
</dbReference>
<dbReference type="InterPro" id="IPR050913">
    <property type="entry name" value="AP2/ERF_ERF_subfamily"/>
</dbReference>
<dbReference type="InterPro" id="IPR016177">
    <property type="entry name" value="DNA-bd_dom_sf"/>
</dbReference>
<dbReference type="PANTHER" id="PTHR31194:SF152">
    <property type="entry name" value="ETHYLENE-RESPONSIVE TRANSCRIPTION FACTOR CRF5-RELATED"/>
    <property type="match status" value="1"/>
</dbReference>
<dbReference type="PANTHER" id="PTHR31194">
    <property type="entry name" value="SHN SHINE , DNA BINDING / TRANSCRIPTION FACTOR"/>
    <property type="match status" value="1"/>
</dbReference>
<dbReference type="Pfam" id="PF00847">
    <property type="entry name" value="AP2"/>
    <property type="match status" value="1"/>
</dbReference>
<dbReference type="PRINTS" id="PR00367">
    <property type="entry name" value="ETHRSPELEMNT"/>
</dbReference>
<dbReference type="SMART" id="SM00380">
    <property type="entry name" value="AP2"/>
    <property type="match status" value="1"/>
</dbReference>
<dbReference type="SUPFAM" id="SSF54171">
    <property type="entry name" value="DNA-binding domain"/>
    <property type="match status" value="1"/>
</dbReference>
<dbReference type="PROSITE" id="PS51032">
    <property type="entry name" value="AP2_ERF"/>
    <property type="match status" value="1"/>
</dbReference>
<name>CRF5_ARATH</name>
<sequence length="294" mass="33156">MKSRVRKSKYTVHRKITSTPFDGFPKIVKIIVTDPCATDSSSDEENDNKSVAPRVKRYVDEIRFCDEDDEPKPARKAKKKSPAAAAENGGDLVKSVVKYRGVRQRPWGKFAAEIRDPSSRTRLWLGTFATAEEAAIGYDRAAIRIKGHNAQTNFLTPPPSPTTEVLPETPVIDLETVSGCDSARESQISLCSPTSVLRFSHNDETEYRTEPTEEQNPFFLPDLFRSGDYFWDSEITPDPLFLDEFHQSLLPNINNNNTVCDKDTNLSDSFPLGVIGDFSSWDVDEFFQDHLLDK</sequence>